<sequence length="106" mass="10780">MIQITPAAQAAIKGAIEGAGQPVAGLRLMVQSGGCAGLKYGMSLELTEAPDDLVVEAEGLRVLIDPQSGTYLNGVTIDFVTSLEGTGFVFDNPNAKGGCGCGKSFC</sequence>
<name>YNIU_CERSP</name>
<comment type="similarity">
    <text evidence="1">Belongs to the HesB/IscA family.</text>
</comment>
<proteinExistence type="inferred from homology"/>
<organism>
    <name type="scientific">Cereibacter sphaeroides</name>
    <name type="common">Rhodobacter sphaeroides</name>
    <dbReference type="NCBI Taxonomy" id="1063"/>
    <lineage>
        <taxon>Bacteria</taxon>
        <taxon>Pseudomonadati</taxon>
        <taxon>Pseudomonadota</taxon>
        <taxon>Alphaproteobacteria</taxon>
        <taxon>Rhodobacterales</taxon>
        <taxon>Paracoccaceae</taxon>
        <taxon>Cereibacter</taxon>
    </lineage>
</organism>
<dbReference type="EMBL" id="M86823">
    <property type="protein sequence ID" value="AAA26135.1"/>
    <property type="molecule type" value="Genomic_DNA"/>
</dbReference>
<dbReference type="PIR" id="A41880">
    <property type="entry name" value="A41880"/>
</dbReference>
<dbReference type="RefSeq" id="WP_009565964.1">
    <property type="nucleotide sequence ID" value="NZ_WTFI01000012.1"/>
</dbReference>
<dbReference type="SMR" id="Q01195"/>
<dbReference type="GeneID" id="67447264"/>
<dbReference type="OMA" id="QTCEPAD"/>
<dbReference type="GO" id="GO:0051537">
    <property type="term" value="F:2 iron, 2 sulfur cluster binding"/>
    <property type="evidence" value="ECO:0007669"/>
    <property type="project" value="TreeGrafter"/>
</dbReference>
<dbReference type="GO" id="GO:0051539">
    <property type="term" value="F:4 iron, 4 sulfur cluster binding"/>
    <property type="evidence" value="ECO:0007669"/>
    <property type="project" value="TreeGrafter"/>
</dbReference>
<dbReference type="GO" id="GO:0005506">
    <property type="term" value="F:iron ion binding"/>
    <property type="evidence" value="ECO:0007669"/>
    <property type="project" value="TreeGrafter"/>
</dbReference>
<dbReference type="GO" id="GO:0016226">
    <property type="term" value="P:iron-sulfur cluster assembly"/>
    <property type="evidence" value="ECO:0007669"/>
    <property type="project" value="InterPro"/>
</dbReference>
<dbReference type="Gene3D" id="2.60.300.12">
    <property type="entry name" value="HesB-like domain"/>
    <property type="match status" value="1"/>
</dbReference>
<dbReference type="InterPro" id="IPR000361">
    <property type="entry name" value="FeS_biogenesis"/>
</dbReference>
<dbReference type="InterPro" id="IPR016092">
    <property type="entry name" value="FeS_cluster_insertion"/>
</dbReference>
<dbReference type="InterPro" id="IPR017870">
    <property type="entry name" value="FeS_cluster_insertion_CS"/>
</dbReference>
<dbReference type="InterPro" id="IPR035903">
    <property type="entry name" value="HesB-like_dom_sf"/>
</dbReference>
<dbReference type="NCBIfam" id="TIGR00049">
    <property type="entry name" value="iron-sulfur cluster assembly accessory protein"/>
    <property type="match status" value="1"/>
</dbReference>
<dbReference type="PANTHER" id="PTHR43011">
    <property type="entry name" value="IRON-SULFUR CLUSTER ASSEMBLY 2 HOMOLOG, MITOCHONDRIAL"/>
    <property type="match status" value="1"/>
</dbReference>
<dbReference type="PANTHER" id="PTHR43011:SF1">
    <property type="entry name" value="IRON-SULFUR CLUSTER ASSEMBLY 2 HOMOLOG, MITOCHONDRIAL"/>
    <property type="match status" value="1"/>
</dbReference>
<dbReference type="Pfam" id="PF01521">
    <property type="entry name" value="Fe-S_biosyn"/>
    <property type="match status" value="1"/>
</dbReference>
<dbReference type="SUPFAM" id="SSF89360">
    <property type="entry name" value="HesB-like domain"/>
    <property type="match status" value="1"/>
</dbReference>
<dbReference type="PROSITE" id="PS01152">
    <property type="entry name" value="HESB"/>
    <property type="match status" value="1"/>
</dbReference>
<protein>
    <recommendedName>
        <fullName>Uncharacterized protein in nifU 5'region</fullName>
    </recommendedName>
    <alternativeName>
        <fullName>ORF1</fullName>
    </alternativeName>
</protein>
<evidence type="ECO:0000305" key="1"/>
<reference key="1">
    <citation type="journal article" date="1992" name="J. Bacteriol.">
        <title>Isolation and characterization of the nifUSVW-rpoN gene cluster from Rhodobacter sphaeroides.</title>
        <authorList>
            <person name="Meijer W.G."/>
            <person name="Tabita F.R."/>
        </authorList>
    </citation>
    <scope>NUCLEOTIDE SEQUENCE [GENOMIC DNA]</scope>
</reference>
<feature type="chain" id="PRO_0000077029" description="Uncharacterized protein in nifU 5'region">
    <location>
        <begin position="1"/>
        <end position="106"/>
    </location>
</feature>
<accession>Q01195</accession>